<feature type="signal peptide" evidence="3">
    <location>
        <begin position="1"/>
        <end position="19"/>
    </location>
</feature>
<feature type="propeptide" id="PRO_0000434279" evidence="5">
    <location>
        <begin position="20"/>
        <end position="39"/>
    </location>
</feature>
<feature type="chain" id="PRO_0000434280" description="Small cysteine-rich protein 1 2">
    <location>
        <begin position="42"/>
        <end position="81"/>
    </location>
</feature>
<sequence length="81" mass="8892">MGVNFNICLLLLLVATISSQPLKATEKDDSTDENPFGIYRRGSQCAVYGGRCIPTSVRCPPNTFQCDLSGCSWSERCCCHL</sequence>
<reference key="1">
    <citation type="journal article" date="2009" name="PLoS ONE">
        <title>Identification and gene expression analysis of a taxonomically restricted cysteine-rich protein family in reef-building corals.</title>
        <authorList>
            <person name="Sunagawa S."/>
            <person name="DeSalvo M.K."/>
            <person name="Voolstra C.R."/>
            <person name="Reyes-Bermudez A."/>
            <person name="Medina M."/>
        </authorList>
    </citation>
    <scope>NUCLEOTIDE SEQUENCE [MRNA]</scope>
</reference>
<reference key="2">
    <citation type="journal article" date="2024" name="Toxins">
        <title>Evolutionary analysis of cnidaria small cysteine-rich proteins (scrips), an enigmatic neurotoxin family from stony corals and sea anemones (Anthozoa: Hexacorallia).</title>
        <authorList>
            <person name="Barroso R.A."/>
            <person name="Ramos L."/>
            <person name="Moreno H."/>
            <person name="Antunes A."/>
        </authorList>
    </citation>
    <scope>NOMENCLATURE</scope>
</reference>
<dbReference type="EMBL" id="BK006538">
    <property type="protein sequence ID" value="DAA06486.1"/>
    <property type="molecule type" value="mRNA"/>
</dbReference>
<dbReference type="SMR" id="C0H694"/>
<dbReference type="GO" id="GO:0005576">
    <property type="term" value="C:extracellular region"/>
    <property type="evidence" value="ECO:0007669"/>
    <property type="project" value="UniProtKB-SubCell"/>
</dbReference>
<dbReference type="GO" id="GO:0042151">
    <property type="term" value="C:nematocyst"/>
    <property type="evidence" value="ECO:0007669"/>
    <property type="project" value="UniProtKB-SubCell"/>
</dbReference>
<dbReference type="GO" id="GO:0090729">
    <property type="term" value="F:toxin activity"/>
    <property type="evidence" value="ECO:0007669"/>
    <property type="project" value="UniProtKB-KW"/>
</dbReference>
<dbReference type="PROSITE" id="PS51345">
    <property type="entry name" value="MYOTOXINS_2"/>
    <property type="match status" value="1"/>
</dbReference>
<evidence type="ECO:0000250" key="1">
    <source>
        <dbReference type="UniProtKB" id="C0H691"/>
    </source>
</evidence>
<evidence type="ECO:0000250" key="2">
    <source>
        <dbReference type="UniProtKB" id="C0H692"/>
    </source>
</evidence>
<evidence type="ECO:0000255" key="3"/>
<evidence type="ECO:0000303" key="4">
    <source>
    </source>
</evidence>
<evidence type="ECO:0000305" key="5"/>
<evidence type="ECO:0000305" key="6">
    <source>
    </source>
</evidence>
<evidence type="ECO:0000305" key="7">
    <source>
    </source>
</evidence>
<protein>
    <recommendedName>
        <fullName evidence="6">Small cysteine-rich protein 1 2</fullName>
        <shortName evidence="4">Mcap-SCRiP1b</shortName>
        <shortName evidence="4">SCRiP1b</shortName>
    </recommendedName>
</protein>
<proteinExistence type="inferred from homology"/>
<comment type="function">
    <text evidence="1 2 6">Induces neurotoxic symptoms on zebrafish (By similarity). Has also been claimed to be implied in calcification, but tests on homolog proteins suggest that proteins of this family have a neurotoxic function and not a calcification function (PubMed:19283069).</text>
</comment>
<comment type="subcellular location">
    <subcellularLocation>
        <location>Secreted</location>
    </subcellularLocation>
    <subcellularLocation>
        <location evidence="5">Nematocyst</location>
    </subcellularLocation>
</comment>
<comment type="PTM">
    <text evidence="5">The basic myotoxic domain of rattlesnake crotamine toxins (with 6 Cys residues) has been detected in this protein. However, this protein contains 2 additional Cys at the C-terminal region. Hence, this protein may contain 4 disulfide bonds instead of the 3 suggested by the myotoxin domain.</text>
</comment>
<comment type="similarity">
    <text evidence="7">Belongs to the Cnidaria small cysteine-rich protein (SCRiP) family. alpha subfamily.</text>
</comment>
<accession>C0H694</accession>
<name>SCR2A_MONCP</name>
<keyword id="KW-0165">Cleavage on pair of basic residues</keyword>
<keyword id="KW-1015">Disulfide bond</keyword>
<keyword id="KW-0166">Nematocyst</keyword>
<keyword id="KW-0528">Neurotoxin</keyword>
<keyword id="KW-0964">Secreted</keyword>
<keyword id="KW-0732">Signal</keyword>
<keyword id="KW-0800">Toxin</keyword>
<organism>
    <name type="scientific">Montipora capitata</name>
    <name type="common">Rice coral</name>
    <dbReference type="NCBI Taxonomy" id="46704"/>
    <lineage>
        <taxon>Eukaryota</taxon>
        <taxon>Metazoa</taxon>
        <taxon>Cnidaria</taxon>
        <taxon>Anthozoa</taxon>
        <taxon>Hexacorallia</taxon>
        <taxon>Scleractinia</taxon>
        <taxon>Astrocoeniina</taxon>
        <taxon>Acroporidae</taxon>
        <taxon>Montipora</taxon>
    </lineage>
</organism>